<sequence length="337" mass="35595">MTTTVYVQDVTLRDGMHAIRHRISPRNVARIAAALDRAGVDAIEVAHGDGLAGSSLSYGPGSHTDWEWIDAVAGAVTNATVTTLLLPGIGTVAQLDEAYRRGVRSVRVATHCTEADIAAQHIAHARELGMDVSGFLMMSHMAQPADLAAQAKLMESFGAQSVYVTDSGGRLTMHDVRDRVLAYRDVLAPSTQIGIHAHENLSLAVANSVAAVEAGATRVDASLAGQGAGAGNCPIEPFVAVADLFGWKHGCDLFALQDAADDIVRPLRDRPVRVDRETLTLGFAGVYSSFLRHAEDASARYGVDTRAILVEVGRRGLIGGQEDMIVDIALSLSAGVP</sequence>
<name>HOA2_MYCVP</name>
<organism>
    <name type="scientific">Mycolicibacterium vanbaalenii (strain DSM 7251 / JCM 13017 / BCRC 16820 / KCTC 9966 / NRRL B-24157 / PYR-1)</name>
    <name type="common">Mycobacterium vanbaalenii</name>
    <dbReference type="NCBI Taxonomy" id="350058"/>
    <lineage>
        <taxon>Bacteria</taxon>
        <taxon>Bacillati</taxon>
        <taxon>Actinomycetota</taxon>
        <taxon>Actinomycetes</taxon>
        <taxon>Mycobacteriales</taxon>
        <taxon>Mycobacteriaceae</taxon>
        <taxon>Mycolicibacterium</taxon>
    </lineage>
</organism>
<protein>
    <recommendedName>
        <fullName evidence="1">4-hydroxy-2-oxovalerate aldolase 2</fullName>
        <shortName evidence="1">HOA 2</shortName>
        <ecNumber evidence="1">4.1.3.39</ecNumber>
    </recommendedName>
    <alternativeName>
        <fullName evidence="1">4-hydroxy-2-keto-pentanoic acid aldolase 2</fullName>
    </alternativeName>
    <alternativeName>
        <fullName evidence="1">4-hydroxy-2-oxopentanoate aldolase 2</fullName>
    </alternativeName>
</protein>
<feature type="chain" id="PRO_0000387867" description="4-hydroxy-2-oxovalerate aldolase 2">
    <location>
        <begin position="1"/>
        <end position="337"/>
    </location>
</feature>
<feature type="domain" description="Pyruvate carboxyltransferase" evidence="1">
    <location>
        <begin position="5"/>
        <end position="257"/>
    </location>
</feature>
<feature type="active site" description="Proton acceptor" evidence="1">
    <location>
        <position position="17"/>
    </location>
</feature>
<feature type="binding site" evidence="1">
    <location>
        <begin position="13"/>
        <end position="14"/>
    </location>
    <ligand>
        <name>substrate</name>
    </ligand>
</feature>
<feature type="binding site" evidence="1">
    <location>
        <position position="14"/>
    </location>
    <ligand>
        <name>Mn(2+)</name>
        <dbReference type="ChEBI" id="CHEBI:29035"/>
    </ligand>
</feature>
<feature type="binding site" evidence="1">
    <location>
        <position position="167"/>
    </location>
    <ligand>
        <name>substrate</name>
    </ligand>
</feature>
<feature type="binding site" evidence="1">
    <location>
        <position position="196"/>
    </location>
    <ligand>
        <name>Mn(2+)</name>
        <dbReference type="ChEBI" id="CHEBI:29035"/>
    </ligand>
</feature>
<feature type="binding site" evidence="1">
    <location>
        <position position="196"/>
    </location>
    <ligand>
        <name>substrate</name>
    </ligand>
</feature>
<feature type="binding site" evidence="1">
    <location>
        <position position="198"/>
    </location>
    <ligand>
        <name>Mn(2+)</name>
        <dbReference type="ChEBI" id="CHEBI:29035"/>
    </ligand>
</feature>
<feature type="binding site" evidence="1">
    <location>
        <position position="287"/>
    </location>
    <ligand>
        <name>substrate</name>
    </ligand>
</feature>
<feature type="site" description="Transition state stabilizer" evidence="1">
    <location>
        <position position="13"/>
    </location>
</feature>
<dbReference type="EC" id="4.1.3.39" evidence="1"/>
<dbReference type="EMBL" id="CP000511">
    <property type="protein sequence ID" value="ABM15167.1"/>
    <property type="molecule type" value="Genomic_DNA"/>
</dbReference>
<dbReference type="SMR" id="A1TDB7"/>
<dbReference type="STRING" id="350058.Mvan_4391"/>
<dbReference type="KEGG" id="mva:Mvan_4391"/>
<dbReference type="eggNOG" id="COG0119">
    <property type="taxonomic scope" value="Bacteria"/>
</dbReference>
<dbReference type="HOGENOM" id="CLU_049173_0_0_11"/>
<dbReference type="Proteomes" id="UP000009159">
    <property type="component" value="Chromosome"/>
</dbReference>
<dbReference type="GO" id="GO:0003852">
    <property type="term" value="F:2-isopropylmalate synthase activity"/>
    <property type="evidence" value="ECO:0007669"/>
    <property type="project" value="TreeGrafter"/>
</dbReference>
<dbReference type="GO" id="GO:0008701">
    <property type="term" value="F:4-hydroxy-2-oxovalerate aldolase activity"/>
    <property type="evidence" value="ECO:0007669"/>
    <property type="project" value="UniProtKB-UniRule"/>
</dbReference>
<dbReference type="GO" id="GO:0030145">
    <property type="term" value="F:manganese ion binding"/>
    <property type="evidence" value="ECO:0007669"/>
    <property type="project" value="UniProtKB-UniRule"/>
</dbReference>
<dbReference type="GO" id="GO:0009056">
    <property type="term" value="P:catabolic process"/>
    <property type="evidence" value="ECO:0007669"/>
    <property type="project" value="UniProtKB-KW"/>
</dbReference>
<dbReference type="GO" id="GO:0009098">
    <property type="term" value="P:L-leucine biosynthetic process"/>
    <property type="evidence" value="ECO:0007669"/>
    <property type="project" value="TreeGrafter"/>
</dbReference>
<dbReference type="CDD" id="cd07943">
    <property type="entry name" value="DRE_TIM_HOA"/>
    <property type="match status" value="1"/>
</dbReference>
<dbReference type="Gene3D" id="1.10.8.60">
    <property type="match status" value="1"/>
</dbReference>
<dbReference type="Gene3D" id="3.20.20.70">
    <property type="entry name" value="Aldolase class I"/>
    <property type="match status" value="1"/>
</dbReference>
<dbReference type="HAMAP" id="MF_01656">
    <property type="entry name" value="HOA"/>
    <property type="match status" value="1"/>
</dbReference>
<dbReference type="InterPro" id="IPR050073">
    <property type="entry name" value="2-IPM_HCS-like"/>
</dbReference>
<dbReference type="InterPro" id="IPR017629">
    <property type="entry name" value="4OH_2_O-val_aldolase"/>
</dbReference>
<dbReference type="InterPro" id="IPR013785">
    <property type="entry name" value="Aldolase_TIM"/>
</dbReference>
<dbReference type="InterPro" id="IPR012425">
    <property type="entry name" value="DmpG_comm"/>
</dbReference>
<dbReference type="InterPro" id="IPR035685">
    <property type="entry name" value="DRE_TIM_HOA"/>
</dbReference>
<dbReference type="InterPro" id="IPR000891">
    <property type="entry name" value="PYR_CT"/>
</dbReference>
<dbReference type="NCBIfam" id="TIGR03217">
    <property type="entry name" value="4OH_2_O_val_ald"/>
    <property type="match status" value="1"/>
</dbReference>
<dbReference type="NCBIfam" id="NF006049">
    <property type="entry name" value="PRK08195.1"/>
    <property type="match status" value="1"/>
</dbReference>
<dbReference type="PANTHER" id="PTHR10277:SF9">
    <property type="entry name" value="2-ISOPROPYLMALATE SYNTHASE 1, CHLOROPLASTIC-RELATED"/>
    <property type="match status" value="1"/>
</dbReference>
<dbReference type="PANTHER" id="PTHR10277">
    <property type="entry name" value="HOMOCITRATE SYNTHASE-RELATED"/>
    <property type="match status" value="1"/>
</dbReference>
<dbReference type="Pfam" id="PF07836">
    <property type="entry name" value="DmpG_comm"/>
    <property type="match status" value="1"/>
</dbReference>
<dbReference type="Pfam" id="PF00682">
    <property type="entry name" value="HMGL-like"/>
    <property type="match status" value="1"/>
</dbReference>
<dbReference type="SUPFAM" id="SSF51569">
    <property type="entry name" value="Aldolase"/>
    <property type="match status" value="1"/>
</dbReference>
<dbReference type="SUPFAM" id="SSF89000">
    <property type="entry name" value="post-HMGL domain-like"/>
    <property type="match status" value="1"/>
</dbReference>
<dbReference type="PROSITE" id="PS50991">
    <property type="entry name" value="PYR_CT"/>
    <property type="match status" value="1"/>
</dbReference>
<accession>A1TDB7</accession>
<proteinExistence type="inferred from homology"/>
<keyword id="KW-0058">Aromatic hydrocarbons catabolism</keyword>
<keyword id="KW-0456">Lyase</keyword>
<keyword id="KW-0464">Manganese</keyword>
<keyword id="KW-0479">Metal-binding</keyword>
<gene>
    <name type="ordered locus">Mvan_4391</name>
</gene>
<reference key="1">
    <citation type="submission" date="2006-12" db="EMBL/GenBank/DDBJ databases">
        <title>Complete sequence of Mycobacterium vanbaalenii PYR-1.</title>
        <authorList>
            <consortium name="US DOE Joint Genome Institute"/>
            <person name="Copeland A."/>
            <person name="Lucas S."/>
            <person name="Lapidus A."/>
            <person name="Barry K."/>
            <person name="Detter J.C."/>
            <person name="Glavina del Rio T."/>
            <person name="Hammon N."/>
            <person name="Israni S."/>
            <person name="Dalin E."/>
            <person name="Tice H."/>
            <person name="Pitluck S."/>
            <person name="Singan V."/>
            <person name="Schmutz J."/>
            <person name="Larimer F."/>
            <person name="Land M."/>
            <person name="Hauser L."/>
            <person name="Kyrpides N."/>
            <person name="Anderson I.J."/>
            <person name="Miller C."/>
            <person name="Richardson P."/>
        </authorList>
    </citation>
    <scope>NUCLEOTIDE SEQUENCE [LARGE SCALE GENOMIC DNA]</scope>
    <source>
        <strain>DSM 7251 / JCM 13017 / BCRC 16820 / KCTC 9966 / NRRL B-24157 / PYR-1</strain>
    </source>
</reference>
<evidence type="ECO:0000255" key="1">
    <source>
        <dbReference type="HAMAP-Rule" id="MF_01656"/>
    </source>
</evidence>
<comment type="catalytic activity">
    <reaction evidence="1">
        <text>(S)-4-hydroxy-2-oxopentanoate = acetaldehyde + pyruvate</text>
        <dbReference type="Rhea" id="RHEA:22624"/>
        <dbReference type="ChEBI" id="CHEBI:15343"/>
        <dbReference type="ChEBI" id="CHEBI:15361"/>
        <dbReference type="ChEBI" id="CHEBI:73143"/>
        <dbReference type="EC" id="4.1.3.39"/>
    </reaction>
</comment>
<comment type="similarity">
    <text evidence="1">Belongs to the 4-hydroxy-2-oxovalerate aldolase family.</text>
</comment>